<protein>
    <recommendedName>
        <fullName evidence="1">Cobyric acid synthase</fullName>
    </recommendedName>
</protein>
<gene>
    <name evidence="1" type="primary">cobQ</name>
    <name type="ordered locus">mma_1101</name>
</gene>
<dbReference type="EMBL" id="CP000269">
    <property type="protein sequence ID" value="ABR89064.1"/>
    <property type="molecule type" value="Genomic_DNA"/>
</dbReference>
<dbReference type="RefSeq" id="WP_012078958.1">
    <property type="nucleotide sequence ID" value="NC_009659.1"/>
</dbReference>
<dbReference type="SMR" id="A6SWZ4"/>
<dbReference type="STRING" id="375286.mma_1101"/>
<dbReference type="KEGG" id="mms:mma_1101"/>
<dbReference type="eggNOG" id="COG1492">
    <property type="taxonomic scope" value="Bacteria"/>
</dbReference>
<dbReference type="HOGENOM" id="CLU_019250_2_2_4"/>
<dbReference type="OrthoDB" id="9808302at2"/>
<dbReference type="UniPathway" id="UPA00148"/>
<dbReference type="Proteomes" id="UP000006388">
    <property type="component" value="Chromosome"/>
</dbReference>
<dbReference type="GO" id="GO:0015420">
    <property type="term" value="F:ABC-type vitamin B12 transporter activity"/>
    <property type="evidence" value="ECO:0007669"/>
    <property type="project" value="UniProtKB-UniRule"/>
</dbReference>
<dbReference type="GO" id="GO:0003824">
    <property type="term" value="F:catalytic activity"/>
    <property type="evidence" value="ECO:0007669"/>
    <property type="project" value="InterPro"/>
</dbReference>
<dbReference type="GO" id="GO:0009236">
    <property type="term" value="P:cobalamin biosynthetic process"/>
    <property type="evidence" value="ECO:0007669"/>
    <property type="project" value="UniProtKB-UniRule"/>
</dbReference>
<dbReference type="CDD" id="cd05389">
    <property type="entry name" value="CobQ_N"/>
    <property type="match status" value="1"/>
</dbReference>
<dbReference type="CDD" id="cd01750">
    <property type="entry name" value="GATase1_CobQ"/>
    <property type="match status" value="1"/>
</dbReference>
<dbReference type="Gene3D" id="3.40.50.880">
    <property type="match status" value="1"/>
</dbReference>
<dbReference type="Gene3D" id="3.40.50.300">
    <property type="entry name" value="P-loop containing nucleotide triphosphate hydrolases"/>
    <property type="match status" value="1"/>
</dbReference>
<dbReference type="HAMAP" id="MF_00028">
    <property type="entry name" value="CobQ"/>
    <property type="match status" value="1"/>
</dbReference>
<dbReference type="InterPro" id="IPR029062">
    <property type="entry name" value="Class_I_gatase-like"/>
</dbReference>
<dbReference type="InterPro" id="IPR002586">
    <property type="entry name" value="CobQ/CobB/MinD/ParA_Nub-bd_dom"/>
</dbReference>
<dbReference type="InterPro" id="IPR033949">
    <property type="entry name" value="CobQ_GATase1"/>
</dbReference>
<dbReference type="InterPro" id="IPR047045">
    <property type="entry name" value="CobQ_N"/>
</dbReference>
<dbReference type="InterPro" id="IPR004459">
    <property type="entry name" value="CobQ_synth"/>
</dbReference>
<dbReference type="InterPro" id="IPR011698">
    <property type="entry name" value="GATase_3"/>
</dbReference>
<dbReference type="InterPro" id="IPR027417">
    <property type="entry name" value="P-loop_NTPase"/>
</dbReference>
<dbReference type="NCBIfam" id="TIGR00313">
    <property type="entry name" value="cobQ"/>
    <property type="match status" value="1"/>
</dbReference>
<dbReference type="NCBIfam" id="NF001989">
    <property type="entry name" value="PRK00784.1"/>
    <property type="match status" value="1"/>
</dbReference>
<dbReference type="PANTHER" id="PTHR21343:SF1">
    <property type="entry name" value="COBYRIC ACID SYNTHASE"/>
    <property type="match status" value="1"/>
</dbReference>
<dbReference type="PANTHER" id="PTHR21343">
    <property type="entry name" value="DETHIOBIOTIN SYNTHETASE"/>
    <property type="match status" value="1"/>
</dbReference>
<dbReference type="Pfam" id="PF01656">
    <property type="entry name" value="CbiA"/>
    <property type="match status" value="1"/>
</dbReference>
<dbReference type="Pfam" id="PF07685">
    <property type="entry name" value="GATase_3"/>
    <property type="match status" value="1"/>
</dbReference>
<dbReference type="SUPFAM" id="SSF52317">
    <property type="entry name" value="Class I glutamine amidotransferase-like"/>
    <property type="match status" value="1"/>
</dbReference>
<dbReference type="SUPFAM" id="SSF52540">
    <property type="entry name" value="P-loop containing nucleoside triphosphate hydrolases"/>
    <property type="match status" value="1"/>
</dbReference>
<dbReference type="PROSITE" id="PS51274">
    <property type="entry name" value="GATASE_COBBQ"/>
    <property type="match status" value="1"/>
</dbReference>
<sequence length="476" mass="50863">MVQGTTSDAGKTTLVAALCRLLAQEGVRVVPFKPQNMALNSAVTADGGEIGRAQALQAVAAGLQPHTDMNPILLKPSSDTGAQVIIHGKARSDMNARDYHAYKPIAMQAVLESYQRLQTQYESVLVEGAGSPAEVNLRERDIANMGFAEAVDCPVILVADIDRGGVFAHIIGTLACLSESERRRTVGFVINRFRGDISLLEPGLKWLEEQTGKPVLAVLPYLHGLFLDAEDAVEHTQAVRGAFRVVVPVPPRISNHTDFDALRAHPEIDLQLVGPGQPIPAADLIILPGSKNTRGDLEWLIANGWREALLRHLRYGGKIIGICGGYQMLGMTVADPHGVEGTPGESAGLGLLDVATELTRDKRLEQVSGVCAFADVGVSGYEIHMGTSDGAARAQPAFLIDGRPEGARSADDQVLGTYLHGLFDTPDACAALLHWAGLNSDVRVDTAQLREASLQRLAAAARPLLAALRALPDYSR</sequence>
<accession>A6SWZ4</accession>
<reference key="1">
    <citation type="journal article" date="2007" name="PLoS Genet.">
        <title>Genome analysis of Minibacterium massiliensis highlights the convergent evolution of water-living bacteria.</title>
        <authorList>
            <person name="Audic S."/>
            <person name="Robert C."/>
            <person name="Campagna B."/>
            <person name="Parinello H."/>
            <person name="Claverie J.-M."/>
            <person name="Raoult D."/>
            <person name="Drancourt M."/>
        </authorList>
    </citation>
    <scope>NUCLEOTIDE SEQUENCE [LARGE SCALE GENOMIC DNA]</scope>
    <source>
        <strain>Marseille</strain>
    </source>
</reference>
<comment type="function">
    <text evidence="1">Catalyzes amidations at positions B, D, E, and G on adenosylcobyrinic A,C-diamide. NH(2) groups are provided by glutamine, and one molecule of ATP is hydrogenolyzed for each amidation.</text>
</comment>
<comment type="pathway">
    <text evidence="1">Cofactor biosynthesis; adenosylcobalamin biosynthesis.</text>
</comment>
<comment type="similarity">
    <text evidence="1">Belongs to the CobB/CobQ family. CobQ subfamily.</text>
</comment>
<feature type="chain" id="PRO_0000332343" description="Cobyric acid synthase">
    <location>
        <begin position="1"/>
        <end position="476"/>
    </location>
</feature>
<feature type="domain" description="GATase cobBQ-type" evidence="1">
    <location>
        <begin position="242"/>
        <end position="428"/>
    </location>
</feature>
<feature type="active site" description="Nucleophile" evidence="1">
    <location>
        <position position="323"/>
    </location>
</feature>
<feature type="active site" evidence="1">
    <location>
        <position position="420"/>
    </location>
</feature>
<evidence type="ECO:0000255" key="1">
    <source>
        <dbReference type="HAMAP-Rule" id="MF_00028"/>
    </source>
</evidence>
<proteinExistence type="inferred from homology"/>
<keyword id="KW-0169">Cobalamin biosynthesis</keyword>
<keyword id="KW-0315">Glutamine amidotransferase</keyword>
<organism>
    <name type="scientific">Janthinobacterium sp. (strain Marseille)</name>
    <name type="common">Minibacterium massiliensis</name>
    <dbReference type="NCBI Taxonomy" id="375286"/>
    <lineage>
        <taxon>Bacteria</taxon>
        <taxon>Pseudomonadati</taxon>
        <taxon>Pseudomonadota</taxon>
        <taxon>Betaproteobacteria</taxon>
        <taxon>Burkholderiales</taxon>
        <taxon>Oxalobacteraceae</taxon>
        <taxon>Janthinobacterium</taxon>
    </lineage>
</organism>
<name>COBQ_JANMA</name>